<feature type="chain" id="PRO_0000181385" description="Probable nicotinate-nucleotide adenylyltransferase">
    <location>
        <begin position="1"/>
        <end position="189"/>
    </location>
</feature>
<protein>
    <recommendedName>
        <fullName evidence="1">Probable nicotinate-nucleotide adenylyltransferase</fullName>
        <ecNumber evidence="1">2.7.7.18</ecNumber>
    </recommendedName>
    <alternativeName>
        <fullName evidence="1">Deamido-NAD(+) diphosphorylase</fullName>
    </alternativeName>
    <alternativeName>
        <fullName evidence="1">Deamido-NAD(+) pyrophosphorylase</fullName>
    </alternativeName>
    <alternativeName>
        <fullName evidence="1">Nicotinate mononucleotide adenylyltransferase</fullName>
        <shortName evidence="1">NaMN adenylyltransferase</shortName>
    </alternativeName>
</protein>
<keyword id="KW-0067">ATP-binding</keyword>
<keyword id="KW-0520">NAD</keyword>
<keyword id="KW-0547">Nucleotide-binding</keyword>
<keyword id="KW-0548">Nucleotidyltransferase</keyword>
<keyword id="KW-0662">Pyridine nucleotide biosynthesis</keyword>
<keyword id="KW-1185">Reference proteome</keyword>
<keyword id="KW-0808">Transferase</keyword>
<sequence>MRKIGIFGGTFDPPHNGHLLMANEVLYKLDLDEIWFMPNQIPPHKQKNSFSLSMHRVEMLKLAISGKEQFKLETIELEREGPSYTFDTVRLLKDRYPDHEFYFIIGADMVEYLPKWSNIDKLVNMIQFVGVKRPGFQIETPYPLVFVDVPIFEVSSSLLRDRIKNRQPTDYLIPDEVKVYVKENRLYET</sequence>
<proteinExistence type="inferred from homology"/>
<reference key="1">
    <citation type="journal article" date="2004" name="J. Mol. Microbiol. Biotechnol.">
        <title>The complete genome sequence of Bacillus licheniformis DSM13, an organism with great industrial potential.</title>
        <authorList>
            <person name="Veith B."/>
            <person name="Herzberg C."/>
            <person name="Steckel S."/>
            <person name="Feesche J."/>
            <person name="Maurer K.H."/>
            <person name="Ehrenreich P."/>
            <person name="Baeumer S."/>
            <person name="Henne A."/>
            <person name="Liesegang H."/>
            <person name="Merkl R."/>
            <person name="Ehrenreich A."/>
            <person name="Gottschalk G."/>
        </authorList>
    </citation>
    <scope>NUCLEOTIDE SEQUENCE [LARGE SCALE GENOMIC DNA]</scope>
    <source>
        <strain>ATCC 14580 / DSM 13 / JCM 2505 / CCUG 7422 / NBRC 12200 / NCIMB 9375 / NCTC 10341 / NRRL NRS-1264 / Gibson 46</strain>
    </source>
</reference>
<reference key="2">
    <citation type="journal article" date="2004" name="Genome Biol.">
        <title>Complete genome sequence of the industrial bacterium Bacillus licheniformis and comparisons with closely related Bacillus species.</title>
        <authorList>
            <person name="Rey M.W."/>
            <person name="Ramaiya P."/>
            <person name="Nelson B.A."/>
            <person name="Brody-Karpin S.D."/>
            <person name="Zaretsky E.J."/>
            <person name="Tang M."/>
            <person name="Lopez de Leon A."/>
            <person name="Xiang H."/>
            <person name="Gusti V."/>
            <person name="Clausen I.G."/>
            <person name="Olsen P.B."/>
            <person name="Rasmussen M.D."/>
            <person name="Andersen J.T."/>
            <person name="Joergensen P.L."/>
            <person name="Larsen T.S."/>
            <person name="Sorokin A."/>
            <person name="Bolotin A."/>
            <person name="Lapidus A."/>
            <person name="Galleron N."/>
            <person name="Ehrlich S.D."/>
            <person name="Berka R.M."/>
        </authorList>
    </citation>
    <scope>NUCLEOTIDE SEQUENCE [LARGE SCALE GENOMIC DNA]</scope>
    <source>
        <strain>ATCC 14580 / DSM 13 / JCM 2505 / CCUG 7422 / NBRC 12200 / NCIMB 9375 / NCTC 10341 / NRRL NRS-1264 / Gibson 46</strain>
    </source>
</reference>
<dbReference type="EC" id="2.7.7.18" evidence="1"/>
<dbReference type="EMBL" id="AE017333">
    <property type="protein sequence ID" value="AAU41628.1"/>
    <property type="molecule type" value="Genomic_DNA"/>
</dbReference>
<dbReference type="EMBL" id="CP000002">
    <property type="protein sequence ID" value="AAU24267.1"/>
    <property type="molecule type" value="Genomic_DNA"/>
</dbReference>
<dbReference type="RefSeq" id="WP_003183702.1">
    <property type="nucleotide sequence ID" value="NC_006322.1"/>
</dbReference>
<dbReference type="SMR" id="Q65H36"/>
<dbReference type="STRING" id="279010.BL02081"/>
<dbReference type="KEGG" id="bld:BLi02757"/>
<dbReference type="KEGG" id="bli:BL02081"/>
<dbReference type="eggNOG" id="COG1057">
    <property type="taxonomic scope" value="Bacteria"/>
</dbReference>
<dbReference type="HOGENOM" id="CLU_069765_3_1_9"/>
<dbReference type="UniPathway" id="UPA00253">
    <property type="reaction ID" value="UER00332"/>
</dbReference>
<dbReference type="Proteomes" id="UP000000606">
    <property type="component" value="Chromosome"/>
</dbReference>
<dbReference type="GO" id="GO:0005524">
    <property type="term" value="F:ATP binding"/>
    <property type="evidence" value="ECO:0007669"/>
    <property type="project" value="UniProtKB-KW"/>
</dbReference>
<dbReference type="GO" id="GO:0004515">
    <property type="term" value="F:nicotinate-nucleotide adenylyltransferase activity"/>
    <property type="evidence" value="ECO:0007669"/>
    <property type="project" value="UniProtKB-UniRule"/>
</dbReference>
<dbReference type="GO" id="GO:0009435">
    <property type="term" value="P:NAD biosynthetic process"/>
    <property type="evidence" value="ECO:0007669"/>
    <property type="project" value="UniProtKB-UniRule"/>
</dbReference>
<dbReference type="CDD" id="cd02165">
    <property type="entry name" value="NMNAT"/>
    <property type="match status" value="1"/>
</dbReference>
<dbReference type="FunFam" id="3.40.50.620:FF:000079">
    <property type="entry name" value="Probable nicotinate-nucleotide adenylyltransferase"/>
    <property type="match status" value="1"/>
</dbReference>
<dbReference type="Gene3D" id="3.40.50.620">
    <property type="entry name" value="HUPs"/>
    <property type="match status" value="1"/>
</dbReference>
<dbReference type="HAMAP" id="MF_00244">
    <property type="entry name" value="NaMN_adenylyltr"/>
    <property type="match status" value="1"/>
</dbReference>
<dbReference type="InterPro" id="IPR004821">
    <property type="entry name" value="Cyt_trans-like"/>
</dbReference>
<dbReference type="InterPro" id="IPR005248">
    <property type="entry name" value="NadD/NMNAT"/>
</dbReference>
<dbReference type="InterPro" id="IPR014729">
    <property type="entry name" value="Rossmann-like_a/b/a_fold"/>
</dbReference>
<dbReference type="NCBIfam" id="TIGR00125">
    <property type="entry name" value="cyt_tran_rel"/>
    <property type="match status" value="1"/>
</dbReference>
<dbReference type="NCBIfam" id="TIGR00482">
    <property type="entry name" value="nicotinate (nicotinamide) nucleotide adenylyltransferase"/>
    <property type="match status" value="1"/>
</dbReference>
<dbReference type="NCBIfam" id="NF000840">
    <property type="entry name" value="PRK00071.1-3"/>
    <property type="match status" value="1"/>
</dbReference>
<dbReference type="NCBIfam" id="NF000841">
    <property type="entry name" value="PRK00071.1-4"/>
    <property type="match status" value="1"/>
</dbReference>
<dbReference type="PANTHER" id="PTHR39321">
    <property type="entry name" value="NICOTINATE-NUCLEOTIDE ADENYLYLTRANSFERASE-RELATED"/>
    <property type="match status" value="1"/>
</dbReference>
<dbReference type="PANTHER" id="PTHR39321:SF3">
    <property type="entry name" value="PHOSPHOPANTETHEINE ADENYLYLTRANSFERASE"/>
    <property type="match status" value="1"/>
</dbReference>
<dbReference type="Pfam" id="PF01467">
    <property type="entry name" value="CTP_transf_like"/>
    <property type="match status" value="1"/>
</dbReference>
<dbReference type="SUPFAM" id="SSF52374">
    <property type="entry name" value="Nucleotidylyl transferase"/>
    <property type="match status" value="1"/>
</dbReference>
<evidence type="ECO:0000255" key="1">
    <source>
        <dbReference type="HAMAP-Rule" id="MF_00244"/>
    </source>
</evidence>
<gene>
    <name evidence="1" type="primary">nadD</name>
    <name type="ordered locus">BLi02757</name>
    <name type="ordered locus">BL02081</name>
</gene>
<name>NADD_BACLD</name>
<comment type="function">
    <text evidence="1">Catalyzes the reversible adenylation of nicotinate mononucleotide (NaMN) to nicotinic acid adenine dinucleotide (NaAD).</text>
</comment>
<comment type="catalytic activity">
    <reaction evidence="1">
        <text>nicotinate beta-D-ribonucleotide + ATP + H(+) = deamido-NAD(+) + diphosphate</text>
        <dbReference type="Rhea" id="RHEA:22860"/>
        <dbReference type="ChEBI" id="CHEBI:15378"/>
        <dbReference type="ChEBI" id="CHEBI:30616"/>
        <dbReference type="ChEBI" id="CHEBI:33019"/>
        <dbReference type="ChEBI" id="CHEBI:57502"/>
        <dbReference type="ChEBI" id="CHEBI:58437"/>
        <dbReference type="EC" id="2.7.7.18"/>
    </reaction>
</comment>
<comment type="pathway">
    <text evidence="1">Cofactor biosynthesis; NAD(+) biosynthesis; deamido-NAD(+) from nicotinate D-ribonucleotide: step 1/1.</text>
</comment>
<comment type="similarity">
    <text evidence="1">Belongs to the NadD family.</text>
</comment>
<organism>
    <name type="scientific">Bacillus licheniformis (strain ATCC 14580 / DSM 13 / JCM 2505 / CCUG 7422 / NBRC 12200 / NCIMB 9375 / NCTC 10341 / NRRL NRS-1264 / Gibson 46)</name>
    <dbReference type="NCBI Taxonomy" id="279010"/>
    <lineage>
        <taxon>Bacteria</taxon>
        <taxon>Bacillati</taxon>
        <taxon>Bacillota</taxon>
        <taxon>Bacilli</taxon>
        <taxon>Bacillales</taxon>
        <taxon>Bacillaceae</taxon>
        <taxon>Bacillus</taxon>
    </lineage>
</organism>
<accession>Q65H36</accession>
<accession>Q62SJ2</accession>